<protein>
    <recommendedName>
        <fullName evidence="1">p-hydroxybenzoic acid efflux pump subunit AaeA</fullName>
        <shortName evidence="1">pHBA efflux pump protein A</shortName>
    </recommendedName>
</protein>
<name>AAEA_ECOUT</name>
<proteinExistence type="inferred from homology"/>
<gene>
    <name evidence="1" type="primary">aaeA</name>
    <name type="ordered locus">UTI89_C3672</name>
</gene>
<feature type="chain" id="PRO_0000300552" description="p-hydroxybenzoic acid efflux pump subunit AaeA">
    <location>
        <begin position="1"/>
        <end position="310"/>
    </location>
</feature>
<feature type="transmembrane region" description="Helical" evidence="1">
    <location>
        <begin position="12"/>
        <end position="32"/>
    </location>
</feature>
<keyword id="KW-0997">Cell inner membrane</keyword>
<keyword id="KW-1003">Cell membrane</keyword>
<keyword id="KW-0472">Membrane</keyword>
<keyword id="KW-0812">Transmembrane</keyword>
<keyword id="KW-1133">Transmembrane helix</keyword>
<keyword id="KW-0813">Transport</keyword>
<comment type="function">
    <text evidence="1">Forms an efflux pump with AaeB.</text>
</comment>
<comment type="subcellular location">
    <subcellularLocation>
        <location evidence="1">Cell inner membrane</location>
        <topology evidence="1">Single-pass membrane protein</topology>
    </subcellularLocation>
</comment>
<comment type="induction">
    <text evidence="1">Positively coregulated with aaeB and aaeX by AaeR.</text>
</comment>
<comment type="similarity">
    <text evidence="1">Belongs to the membrane fusion protein (MFP) (TC 8.A.1) family.</text>
</comment>
<organism>
    <name type="scientific">Escherichia coli (strain UTI89 / UPEC)</name>
    <dbReference type="NCBI Taxonomy" id="364106"/>
    <lineage>
        <taxon>Bacteria</taxon>
        <taxon>Pseudomonadati</taxon>
        <taxon>Pseudomonadota</taxon>
        <taxon>Gammaproteobacteria</taxon>
        <taxon>Enterobacterales</taxon>
        <taxon>Enterobacteriaceae</taxon>
        <taxon>Escherichia</taxon>
    </lineage>
</organism>
<dbReference type="EMBL" id="CP000243">
    <property type="protein sequence ID" value="ABE09116.1"/>
    <property type="molecule type" value="Genomic_DNA"/>
</dbReference>
<dbReference type="RefSeq" id="WP_000854033.1">
    <property type="nucleotide sequence ID" value="NZ_CP064825.1"/>
</dbReference>
<dbReference type="SMR" id="Q1R698"/>
<dbReference type="KEGG" id="eci:UTI89_C3672"/>
<dbReference type="HOGENOM" id="CLU_018816_15_2_6"/>
<dbReference type="Proteomes" id="UP000001952">
    <property type="component" value="Chromosome"/>
</dbReference>
<dbReference type="GO" id="GO:0005886">
    <property type="term" value="C:plasma membrane"/>
    <property type="evidence" value="ECO:0007669"/>
    <property type="project" value="UniProtKB-SubCell"/>
</dbReference>
<dbReference type="GO" id="GO:0022857">
    <property type="term" value="F:transmembrane transporter activity"/>
    <property type="evidence" value="ECO:0007669"/>
    <property type="project" value="UniProtKB-UniRule"/>
</dbReference>
<dbReference type="FunFam" id="2.40.30.170:FF:000002">
    <property type="entry name" value="p-hydroxybenzoic acid efflux pump subunit AaeA"/>
    <property type="match status" value="1"/>
</dbReference>
<dbReference type="FunFam" id="2.40.50.100:FF:000018">
    <property type="entry name" value="p-hydroxybenzoic acid efflux pump subunit AaeA"/>
    <property type="match status" value="1"/>
</dbReference>
<dbReference type="Gene3D" id="2.40.30.170">
    <property type="match status" value="1"/>
</dbReference>
<dbReference type="Gene3D" id="2.40.50.100">
    <property type="match status" value="1"/>
</dbReference>
<dbReference type="HAMAP" id="MF_01544">
    <property type="entry name" value="AaeA"/>
    <property type="match status" value="1"/>
</dbReference>
<dbReference type="InterPro" id="IPR043602">
    <property type="entry name" value="CusB-like_dom_1"/>
</dbReference>
<dbReference type="InterPro" id="IPR032317">
    <property type="entry name" value="CusB_D23"/>
</dbReference>
<dbReference type="InterPro" id="IPR050393">
    <property type="entry name" value="MFP_Efflux_Pump"/>
</dbReference>
<dbReference type="InterPro" id="IPR022871">
    <property type="entry name" value="PHBA_efflux_pump_AaeA"/>
</dbReference>
<dbReference type="InterPro" id="IPR006143">
    <property type="entry name" value="RND_pump_MFP"/>
</dbReference>
<dbReference type="NCBIfam" id="NF007850">
    <property type="entry name" value="PRK10559.1"/>
    <property type="match status" value="1"/>
</dbReference>
<dbReference type="NCBIfam" id="TIGR01730">
    <property type="entry name" value="RND_mfp"/>
    <property type="match status" value="1"/>
</dbReference>
<dbReference type="PANTHER" id="PTHR30367:SF12">
    <property type="entry name" value="P-HYDROXYBENZOIC ACID EFFLUX PUMP SUBUNIT AAEA"/>
    <property type="match status" value="1"/>
</dbReference>
<dbReference type="PANTHER" id="PTHR30367">
    <property type="entry name" value="P-HYDROXYBENZOIC ACID EFFLUX PUMP SUBUNIT AAEA-RELATED"/>
    <property type="match status" value="1"/>
</dbReference>
<dbReference type="Pfam" id="PF00529">
    <property type="entry name" value="CusB_dom_1"/>
    <property type="match status" value="1"/>
</dbReference>
<dbReference type="Pfam" id="PF16576">
    <property type="entry name" value="HlyD_D23"/>
    <property type="match status" value="1"/>
</dbReference>
<dbReference type="SUPFAM" id="SSF111369">
    <property type="entry name" value="HlyD-like secretion proteins"/>
    <property type="match status" value="1"/>
</dbReference>
<accession>Q1R698</accession>
<reference key="1">
    <citation type="journal article" date="2006" name="Proc. Natl. Acad. Sci. U.S.A.">
        <title>Identification of genes subject to positive selection in uropathogenic strains of Escherichia coli: a comparative genomics approach.</title>
        <authorList>
            <person name="Chen S.L."/>
            <person name="Hung C.-S."/>
            <person name="Xu J."/>
            <person name="Reigstad C.S."/>
            <person name="Magrini V."/>
            <person name="Sabo A."/>
            <person name="Blasiar D."/>
            <person name="Bieri T."/>
            <person name="Meyer R.R."/>
            <person name="Ozersky P."/>
            <person name="Armstrong J.R."/>
            <person name="Fulton R.S."/>
            <person name="Latreille J.P."/>
            <person name="Spieth J."/>
            <person name="Hooton T.M."/>
            <person name="Mardis E.R."/>
            <person name="Hultgren S.J."/>
            <person name="Gordon J.I."/>
        </authorList>
    </citation>
    <scope>NUCLEOTIDE SEQUENCE [LARGE SCALE GENOMIC DNA]</scope>
    <source>
        <strain>UTI89 / UPEC</strain>
    </source>
</reference>
<evidence type="ECO:0000255" key="1">
    <source>
        <dbReference type="HAMAP-Rule" id="MF_01544"/>
    </source>
</evidence>
<sequence length="310" mass="34761">MKTLIRKFSRTAITVVLVILAFIAIFNAWVYYTESPWTRDARFSADVVAIAPDVSGLITQVNVHDNQLVKKGQVLFTIDQPRYQKALEEAQADVAYYQVLAQEKRQEAGRRNRLGVQAMSREEIDQANNVLQTVLHQLAKAQATRDLAKLDLERTVIRAPADGWVTNLNVYTGEFITRGSTAVALVKQNSFYVLAYMEETKLEGVRPGYRAEITPLGSNKVLKGTVDSVAAGVTNASSTRDDKGMATIDSNLEWVRLAQRVPVRIRLDNQQENIWPAGTTATVVVTGKQDRDESQDSFFRKMAHRLREFG</sequence>